<gene>
    <name evidence="13" type="ordered locus">Ta0809</name>
</gene>
<dbReference type="EC" id="1.2.1.89" evidence="9 10"/>
<dbReference type="EMBL" id="AL445065">
    <property type="protein sequence ID" value="CAC11938.1"/>
    <property type="molecule type" value="Genomic_DNA"/>
</dbReference>
<dbReference type="RefSeq" id="WP_010901221.1">
    <property type="nucleotide sequence ID" value="NC_002578.1"/>
</dbReference>
<dbReference type="PDB" id="5IZD">
    <property type="method" value="X-ray"/>
    <property type="resolution" value="2.05 A"/>
    <property type="chains" value="A/B/C/D/E/F/G/H=1-493"/>
</dbReference>
<dbReference type="PDB" id="5J77">
    <property type="method" value="X-ray"/>
    <property type="resolution" value="2.10 A"/>
    <property type="chains" value="A/B/C/D=1-493"/>
</dbReference>
<dbReference type="PDB" id="5M4X">
    <property type="method" value="X-ray"/>
    <property type="resolution" value="3.56 A"/>
    <property type="chains" value="A/B/C/D=1-493"/>
</dbReference>
<dbReference type="PDBsum" id="5IZD"/>
<dbReference type="PDBsum" id="5J77"/>
<dbReference type="PDBsum" id="5M4X"/>
<dbReference type="SMR" id="Q9HK01"/>
<dbReference type="STRING" id="273075.gene:9572023"/>
<dbReference type="PaxDb" id="273075-Ta0809"/>
<dbReference type="EnsemblBacteria" id="CAC11938">
    <property type="protein sequence ID" value="CAC11938"/>
    <property type="gene ID" value="CAC11938"/>
</dbReference>
<dbReference type="KEGG" id="tac:Ta0809"/>
<dbReference type="eggNOG" id="arCOG01252">
    <property type="taxonomic scope" value="Archaea"/>
</dbReference>
<dbReference type="HOGENOM" id="CLU_005391_1_0_2"/>
<dbReference type="InParanoid" id="Q9HK01"/>
<dbReference type="OrthoDB" id="6342at2157"/>
<dbReference type="BRENDA" id="1.2.1.89">
    <property type="organism ID" value="6324"/>
</dbReference>
<dbReference type="SABIO-RK" id="Q9HK01"/>
<dbReference type="UniPathway" id="UPA00109"/>
<dbReference type="Proteomes" id="UP000001024">
    <property type="component" value="Chromosome"/>
</dbReference>
<dbReference type="GO" id="GO:0005829">
    <property type="term" value="C:cytosol"/>
    <property type="evidence" value="ECO:0007669"/>
    <property type="project" value="TreeGrafter"/>
</dbReference>
<dbReference type="GO" id="GO:0043796">
    <property type="term" value="F:glyceraldehyde dehydrogenase (NADP+) activity"/>
    <property type="evidence" value="ECO:0000314"/>
    <property type="project" value="UniProtKB"/>
</dbReference>
<dbReference type="GO" id="GO:0042803">
    <property type="term" value="F:protein homodimerization activity"/>
    <property type="evidence" value="ECO:0000314"/>
    <property type="project" value="UniProtKB"/>
</dbReference>
<dbReference type="GO" id="GO:0004777">
    <property type="term" value="F:succinate-semialdehyde dehydrogenase (NAD+) activity"/>
    <property type="evidence" value="ECO:0007669"/>
    <property type="project" value="TreeGrafter"/>
</dbReference>
<dbReference type="GO" id="GO:0009255">
    <property type="term" value="P:Entner-Doudoroff pathway through 6-phosphogluconate"/>
    <property type="evidence" value="ECO:0000314"/>
    <property type="project" value="UniProtKB"/>
</dbReference>
<dbReference type="GO" id="GO:0009450">
    <property type="term" value="P:gamma-aminobutyric acid catabolic process"/>
    <property type="evidence" value="ECO:0007669"/>
    <property type="project" value="TreeGrafter"/>
</dbReference>
<dbReference type="GO" id="GO:0006096">
    <property type="term" value="P:glycolytic process"/>
    <property type="evidence" value="ECO:0007669"/>
    <property type="project" value="UniProtKB-UniPathway"/>
</dbReference>
<dbReference type="GO" id="GO:0051289">
    <property type="term" value="P:protein homotetramerization"/>
    <property type="evidence" value="ECO:0000314"/>
    <property type="project" value="UniProtKB"/>
</dbReference>
<dbReference type="CDD" id="cd07088">
    <property type="entry name" value="ALDH_LactADH-AldA"/>
    <property type="match status" value="1"/>
</dbReference>
<dbReference type="FunFam" id="3.40.309.10:FF:000009">
    <property type="entry name" value="Aldehyde dehydrogenase A"/>
    <property type="match status" value="1"/>
</dbReference>
<dbReference type="FunFam" id="3.40.605.10:FF:000022">
    <property type="entry name" value="Aldehyde dehydrogenase A"/>
    <property type="match status" value="1"/>
</dbReference>
<dbReference type="Gene3D" id="3.40.605.10">
    <property type="entry name" value="Aldehyde Dehydrogenase, Chain A, domain 1"/>
    <property type="match status" value="1"/>
</dbReference>
<dbReference type="Gene3D" id="3.40.309.10">
    <property type="entry name" value="Aldehyde Dehydrogenase, Chain A, domain 2"/>
    <property type="match status" value="1"/>
</dbReference>
<dbReference type="InterPro" id="IPR016161">
    <property type="entry name" value="Ald_DH/histidinol_DH"/>
</dbReference>
<dbReference type="InterPro" id="IPR016163">
    <property type="entry name" value="Ald_DH_C"/>
</dbReference>
<dbReference type="InterPro" id="IPR016160">
    <property type="entry name" value="Ald_DH_CS_CYS"/>
</dbReference>
<dbReference type="InterPro" id="IPR029510">
    <property type="entry name" value="Ald_DH_CS_GLU"/>
</dbReference>
<dbReference type="InterPro" id="IPR016162">
    <property type="entry name" value="Ald_DH_N"/>
</dbReference>
<dbReference type="InterPro" id="IPR015590">
    <property type="entry name" value="Aldehyde_DH_dom"/>
</dbReference>
<dbReference type="InterPro" id="IPR050740">
    <property type="entry name" value="Aldehyde_DH_Superfamily"/>
</dbReference>
<dbReference type="InterPro" id="IPR053507">
    <property type="entry name" value="NADP-Glyceraldehyde_DH"/>
</dbReference>
<dbReference type="NCBIfam" id="NF040792">
    <property type="entry name" value="glyc_ald_dh"/>
    <property type="match status" value="1"/>
</dbReference>
<dbReference type="PANTHER" id="PTHR43353">
    <property type="entry name" value="SUCCINATE-SEMIALDEHYDE DEHYDROGENASE, MITOCHONDRIAL"/>
    <property type="match status" value="1"/>
</dbReference>
<dbReference type="PANTHER" id="PTHR43353:SF5">
    <property type="entry name" value="SUCCINATE-SEMIALDEHYDE DEHYDROGENASE, MITOCHONDRIAL"/>
    <property type="match status" value="1"/>
</dbReference>
<dbReference type="Pfam" id="PF00171">
    <property type="entry name" value="Aldedh"/>
    <property type="match status" value="1"/>
</dbReference>
<dbReference type="SUPFAM" id="SSF53720">
    <property type="entry name" value="ALDH-like"/>
    <property type="match status" value="1"/>
</dbReference>
<dbReference type="PROSITE" id="PS00070">
    <property type="entry name" value="ALDEHYDE_DEHYDR_CYS"/>
    <property type="match status" value="1"/>
</dbReference>
<dbReference type="PROSITE" id="PS00687">
    <property type="entry name" value="ALDEHYDE_DEHYDR_GLU"/>
    <property type="match status" value="1"/>
</dbReference>
<protein>
    <recommendedName>
        <fullName evidence="11">D-glyceraldehyde dehydrogenase (NADP(+))</fullName>
        <shortName evidence="11">GADH</shortName>
        <shortName evidence="11">Glyceraldehyde DH</shortName>
        <ecNumber evidence="9 10">1.2.1.89</ecNumber>
    </recommendedName>
</protein>
<evidence type="ECO:0000250" key="1"/>
<evidence type="ECO:0000250" key="2">
    <source>
        <dbReference type="UniProtKB" id="O57693"/>
    </source>
</evidence>
<evidence type="ECO:0000250" key="3">
    <source>
        <dbReference type="UniProtKB" id="P28037"/>
    </source>
</evidence>
<evidence type="ECO:0000250" key="4">
    <source>
        <dbReference type="UniProtKB" id="Q59931"/>
    </source>
</evidence>
<evidence type="ECO:0000250" key="5">
    <source>
        <dbReference type="UniProtKB" id="Q84DC3"/>
    </source>
</evidence>
<evidence type="ECO:0000255" key="6"/>
<evidence type="ECO:0000255" key="7">
    <source>
        <dbReference type="PROSITE-ProRule" id="PRU10007"/>
    </source>
</evidence>
<evidence type="ECO:0000255" key="8">
    <source>
        <dbReference type="RuleBase" id="RU003345"/>
    </source>
</evidence>
<evidence type="ECO:0000269" key="9">
    <source>
    </source>
</evidence>
<evidence type="ECO:0000269" key="10">
    <source>
    </source>
</evidence>
<evidence type="ECO:0000303" key="11">
    <source>
    </source>
</evidence>
<evidence type="ECO:0000305" key="12"/>
<evidence type="ECO:0000312" key="13">
    <source>
        <dbReference type="EMBL" id="CAC11938.1"/>
    </source>
</evidence>
<evidence type="ECO:0007829" key="14">
    <source>
        <dbReference type="PDB" id="5IZD"/>
    </source>
</evidence>
<evidence type="ECO:0007829" key="15">
    <source>
        <dbReference type="PDB" id="5J77"/>
    </source>
</evidence>
<organism>
    <name type="scientific">Thermoplasma acidophilum (strain ATCC 25905 / DSM 1728 / JCM 9062 / NBRC 15155 / AMRC-C165)</name>
    <dbReference type="NCBI Taxonomy" id="273075"/>
    <lineage>
        <taxon>Archaea</taxon>
        <taxon>Methanobacteriati</taxon>
        <taxon>Thermoplasmatota</taxon>
        <taxon>Thermoplasmata</taxon>
        <taxon>Thermoplasmatales</taxon>
        <taxon>Thermoplasmataceae</taxon>
        <taxon>Thermoplasma</taxon>
    </lineage>
</organism>
<sequence length="493" mass="54782">MDTKLYIDGQWVNSSSGKTVDKYSPVTGQVIGRFEAATRDDVDRAIDAAEDAFWAWNDLGSVERSKIIYRAKELIEKNRAELENIIMEENGKPVKEAKEEVDGVIDQIQYYAEWARKLNGEVVEGTSSHRKIFQYKVPYGIVVALTPWNFPAGMVARKLAPALLTGNTVVLKPSSDTPGSAEWIVRKFVEAGVPKGVLNFITGRGSEIGDYIVEHKKVNLITMTGSTATGQRIMQKASANMAKLILELGGKAPFMVWKDADMDNALKTLLWAKYWNAGQSCIAAERLYVHEDIYDTFMSRFVELSRKLALGDPKNADMGPLINKGALQATSEIVEEAKESGAKILFGGSQPSLSGPYRNGYFFLPTIIGNADQKSKIFQEEIFAPVIGARKISSVEEMYDLANDSKYGLASYLFTKDPNIIFEASERIRFGELYVNMPGPEASQGYHTGFRMTGQAGEGSKYGISEYLKLKNIYVDYSGKPLHINTVRDDLFQ</sequence>
<proteinExistence type="evidence at protein level"/>
<comment type="function">
    <text evidence="9 10">NADP-dependent dehydrogenase of the nED (non-phosphorylated Entner-Doudoroff) pathway with highest activity towards glyceraldehydes (e.g. D,L-glyceraldehyde and D-glyceraldehyde), to a lesser extent towards D,L-glyceraldehyde-3-phosphate and glycolaldehyde, but no activity towards aliphatic or aromatic aldehydes.</text>
</comment>
<comment type="catalytic activity">
    <reaction evidence="9 10">
        <text>D-glyceraldehyde + NADP(+) + H2O = (R)-glycerate + NADPH + 2 H(+)</text>
        <dbReference type="Rhea" id="RHEA:40163"/>
        <dbReference type="ChEBI" id="CHEBI:15377"/>
        <dbReference type="ChEBI" id="CHEBI:15378"/>
        <dbReference type="ChEBI" id="CHEBI:16659"/>
        <dbReference type="ChEBI" id="CHEBI:17378"/>
        <dbReference type="ChEBI" id="CHEBI:57783"/>
        <dbReference type="ChEBI" id="CHEBI:58349"/>
        <dbReference type="EC" id="1.2.1.89"/>
    </reaction>
</comment>
<comment type="activity regulation">
    <text evidence="10">Inhibited by calcium, cadmium, copper and mercury ions. Stable for 2 hours at 60 degrees Celsius but activity is decreased to less than 50 percent within 20 minutes at 80 degrees Celsius. Two folds activity enhancement in the presence of 1 mM glutathione, DTT, or 2-mercaptoethanol. Complete activity inhibition by thiol-modifying reagents such as p-chloromercuribenzoic acid or p-hydroxy-mercuribenzoic acid.</text>
</comment>
<comment type="biophysicochemical properties">
    <kinetics>
        <KM evidence="9">0.2 mM for glyceraldehyde (at pH 7.9 and 58 degrees Celsius)</KM>
        <KM evidence="9">18.3 mM for glyceraldehyde-3-phosphate (at pH 7.9 and 58 degrees Celsius)</KM>
        <KM evidence="9">12.3 mM for glycolaldehyde (at pH 7.9 and 58 degrees Celsius)</KM>
        <KM evidence="9">0.36 mM for NADP (at pH 7.9 and 58 degrees Celsius)</KM>
        <KM evidence="10">0.33 mM for D,L-glyceraldehyde (at pH 8 and 50 degrees Celsius)</KM>
        <KM evidence="10">0.017 mM for NADP (at pH 8 and 50 degrees Celsius)</KM>
        <Vmax evidence="10">0.3 umol/min/mg enzyme with D,L-glyceraldehyde as substrate (at pH 8 and 50 degrees Celsius)</Vmax>
        <Vmax evidence="10">0.3 umol/min/mg enzyme with NADP as substrate (at pH 8 and 50 degrees Celsius)</Vmax>
        <text evidence="9">kcat is 26 sec(-1) with glyceraldehyde as substrate, 20 sec(-1) with glyceraldehyde-3-phosphate as substrate, 37 sec(-1) with glycolaldehyde as substrate and 25 sec(-1) with NADP as substrate (at pH 7.9 and 58 degrees Celsius).</text>
    </kinetics>
    <phDependence>
        <text evidence="9 10">Optimum pH is 7.6-8.</text>
    </phDependence>
    <temperatureDependence>
        <text evidence="9 10">Optimum temperature is 50-55 degrees Celsius at pH 8 and 63 degrees Celsius at pH 7.6.</text>
    </temperatureDependence>
</comment>
<comment type="pathway">
    <text evidence="11">Carbohydrate degradation; glycolysis.</text>
</comment>
<comment type="subunit">
    <text evidence="9 10">Homotetramer. Dimer of dimers.</text>
</comment>
<comment type="similarity">
    <text evidence="8 12">Belongs to the aldehyde dehydrogenase family. Glyceraldehyde dehydrogenase subfamily.</text>
</comment>
<accession>Q9HK01</accession>
<keyword id="KW-0002">3D-structure</keyword>
<keyword id="KW-0175">Coiled coil</keyword>
<keyword id="KW-0521">NADP</keyword>
<keyword id="KW-0560">Oxidoreductase</keyword>
<keyword id="KW-1185">Reference proteome</keyword>
<feature type="chain" id="PRO_0000430740" description="D-glyceraldehyde dehydrogenase (NADP(+))">
    <location>
        <begin position="1"/>
        <end position="493"/>
    </location>
</feature>
<feature type="coiled-coil region" evidence="6">
    <location>
        <begin position="70"/>
        <end position="92"/>
    </location>
</feature>
<feature type="active site" description="Proton acceptor" evidence="7">
    <location>
        <position position="247"/>
    </location>
</feature>
<feature type="active site" description="Proton donor" evidence="3">
    <location>
        <position position="281"/>
    </location>
</feature>
<feature type="binding site" evidence="3">
    <location>
        <begin position="146"/>
        <end position="149"/>
    </location>
    <ligand>
        <name>NADP(+)</name>
        <dbReference type="ChEBI" id="CHEBI:58349"/>
    </ligand>
</feature>
<feature type="binding site" evidence="2">
    <location>
        <position position="149"/>
    </location>
    <ligand>
        <name>substrate</name>
    </ligand>
</feature>
<feature type="binding site" evidence="1">
    <location>
        <position position="157"/>
    </location>
    <ligand>
        <name>NADP(+)</name>
        <dbReference type="ChEBI" id="CHEBI:58349"/>
    </ligand>
</feature>
<feature type="binding site" evidence="1">
    <location>
        <position position="157"/>
    </location>
    <ligand>
        <name>substrate</name>
    </ligand>
</feature>
<feature type="binding site" evidence="4 5">
    <location>
        <begin position="172"/>
        <end position="176"/>
    </location>
    <ligand>
        <name>NADP(+)</name>
        <dbReference type="ChEBI" id="CHEBI:58349"/>
    </ligand>
</feature>
<feature type="binding site" evidence="5">
    <location>
        <begin position="204"/>
        <end position="210"/>
    </location>
    <ligand>
        <name>NADP(+)</name>
        <dbReference type="ChEBI" id="CHEBI:58349"/>
    </ligand>
</feature>
<feature type="binding site" evidence="4">
    <location>
        <begin position="225"/>
        <end position="248"/>
    </location>
    <ligand>
        <name>NADP(+)</name>
        <dbReference type="ChEBI" id="CHEBI:58349"/>
    </ligand>
</feature>
<feature type="binding site" evidence="5">
    <location>
        <position position="281"/>
    </location>
    <ligand>
        <name>NADP(+)</name>
        <dbReference type="ChEBI" id="CHEBI:58349"/>
    </ligand>
</feature>
<feature type="binding site" evidence="1">
    <location>
        <position position="281"/>
    </location>
    <ligand>
        <name>substrate</name>
    </ligand>
</feature>
<feature type="binding site" evidence="3 4">
    <location>
        <begin position="381"/>
        <end position="383"/>
    </location>
    <ligand>
        <name>NADP(+)</name>
        <dbReference type="ChEBI" id="CHEBI:58349"/>
    </ligand>
</feature>
<feature type="site" description="Transition state stabilizer" evidence="1">
    <location>
        <position position="149"/>
    </location>
</feature>
<feature type="strand" evidence="14">
    <location>
        <begin position="5"/>
        <end position="7"/>
    </location>
</feature>
<feature type="strand" evidence="14">
    <location>
        <begin position="10"/>
        <end position="12"/>
    </location>
</feature>
<feature type="strand" evidence="14">
    <location>
        <begin position="19"/>
        <end position="23"/>
    </location>
</feature>
<feature type="turn" evidence="14">
    <location>
        <begin position="25"/>
        <end position="27"/>
    </location>
</feature>
<feature type="strand" evidence="14">
    <location>
        <begin position="29"/>
        <end position="35"/>
    </location>
</feature>
<feature type="helix" evidence="14">
    <location>
        <begin position="39"/>
        <end position="77"/>
    </location>
</feature>
<feature type="helix" evidence="14">
    <location>
        <begin position="79"/>
        <end position="90"/>
    </location>
</feature>
<feature type="helix" evidence="14">
    <location>
        <begin position="94"/>
        <end position="112"/>
    </location>
</feature>
<feature type="turn" evidence="14">
    <location>
        <begin position="113"/>
        <end position="116"/>
    </location>
</feature>
<feature type="strand" evidence="14">
    <location>
        <begin position="120"/>
        <end position="124"/>
    </location>
</feature>
<feature type="strand" evidence="14">
    <location>
        <begin position="130"/>
        <end position="138"/>
    </location>
</feature>
<feature type="strand" evidence="14">
    <location>
        <begin position="140"/>
        <end position="145"/>
    </location>
</feature>
<feature type="strand" evidence="14">
    <location>
        <begin position="148"/>
        <end position="150"/>
    </location>
</feature>
<feature type="helix" evidence="14">
    <location>
        <begin position="153"/>
        <end position="164"/>
    </location>
</feature>
<feature type="strand" evidence="14">
    <location>
        <begin position="168"/>
        <end position="172"/>
    </location>
</feature>
<feature type="helix" evidence="14">
    <location>
        <begin position="178"/>
        <end position="190"/>
    </location>
</feature>
<feature type="turn" evidence="14">
    <location>
        <begin position="195"/>
        <end position="197"/>
    </location>
</feature>
<feature type="strand" evidence="14">
    <location>
        <begin position="198"/>
        <end position="200"/>
    </location>
</feature>
<feature type="helix" evidence="14">
    <location>
        <begin position="205"/>
        <end position="214"/>
    </location>
</feature>
<feature type="strand" evidence="14">
    <location>
        <begin position="220"/>
        <end position="225"/>
    </location>
</feature>
<feature type="helix" evidence="14">
    <location>
        <begin position="227"/>
        <end position="236"/>
    </location>
</feature>
<feature type="helix" evidence="14">
    <location>
        <begin position="237"/>
        <end position="239"/>
    </location>
</feature>
<feature type="strand" evidence="14">
    <location>
        <begin position="243"/>
        <end position="247"/>
    </location>
</feature>
<feature type="strand" evidence="14">
    <location>
        <begin position="252"/>
        <end position="256"/>
    </location>
</feature>
<feature type="helix" evidence="14">
    <location>
        <begin position="262"/>
        <end position="274"/>
    </location>
</feature>
<feature type="helix" evidence="14">
    <location>
        <begin position="275"/>
        <end position="278"/>
    </location>
</feature>
<feature type="strand" evidence="14">
    <location>
        <begin position="284"/>
        <end position="290"/>
    </location>
</feature>
<feature type="turn" evidence="14">
    <location>
        <begin position="291"/>
        <end position="293"/>
    </location>
</feature>
<feature type="helix" evidence="14">
    <location>
        <begin position="294"/>
        <end position="305"/>
    </location>
</feature>
<feature type="turn" evidence="14">
    <location>
        <begin position="313"/>
        <end position="315"/>
    </location>
</feature>
<feature type="helix" evidence="14">
    <location>
        <begin position="324"/>
        <end position="339"/>
    </location>
</feature>
<feature type="strand" evidence="14">
    <location>
        <begin position="343"/>
        <end position="346"/>
    </location>
</feature>
<feature type="helix" evidence="14">
    <location>
        <begin position="355"/>
        <end position="359"/>
    </location>
</feature>
<feature type="strand" evidence="14">
    <location>
        <begin position="366"/>
        <end position="370"/>
    </location>
</feature>
<feature type="helix" evidence="14">
    <location>
        <begin position="376"/>
        <end position="379"/>
    </location>
</feature>
<feature type="strand" evidence="14">
    <location>
        <begin position="384"/>
        <end position="392"/>
    </location>
</feature>
<feature type="helix" evidence="14">
    <location>
        <begin position="395"/>
        <end position="403"/>
    </location>
</feature>
<feature type="strand" evidence="15">
    <location>
        <begin position="404"/>
        <end position="406"/>
    </location>
</feature>
<feature type="strand" evidence="14">
    <location>
        <begin position="409"/>
        <end position="414"/>
    </location>
</feature>
<feature type="helix" evidence="14">
    <location>
        <begin position="418"/>
        <end position="427"/>
    </location>
</feature>
<feature type="strand" evidence="14">
    <location>
        <begin position="430"/>
        <end position="437"/>
    </location>
</feature>
<feature type="helix" evidence="14">
    <location>
        <begin position="451"/>
        <end position="453"/>
    </location>
</feature>
<feature type="strand" evidence="14">
    <location>
        <begin position="454"/>
        <end position="456"/>
    </location>
</feature>
<feature type="helix" evidence="14">
    <location>
        <begin position="460"/>
        <end position="465"/>
    </location>
</feature>
<feature type="strand" evidence="14">
    <location>
        <begin position="468"/>
        <end position="476"/>
    </location>
</feature>
<feature type="helix" evidence="14">
    <location>
        <begin position="489"/>
        <end position="492"/>
    </location>
</feature>
<reference key="1">
    <citation type="journal article" date="2000" name="Nature">
        <title>The genome sequence of the thermoacidophilic scavenger Thermoplasma acidophilum.</title>
        <authorList>
            <person name="Ruepp A."/>
            <person name="Graml W."/>
            <person name="Santos-Martinez M.-L."/>
            <person name="Koretke K.K."/>
            <person name="Volker C."/>
            <person name="Mewes H.-W."/>
            <person name="Frishman D."/>
            <person name="Stocker S."/>
            <person name="Lupas A.N."/>
            <person name="Baumeister W."/>
        </authorList>
    </citation>
    <scope>NUCLEOTIDE SEQUENCE [LARGE SCALE GENOMIC DNA]</scope>
    <source>
        <strain>ATCC 25905 / DSM 1728 / JCM 9062 / NBRC 15155 / AMRC-C165</strain>
    </source>
</reference>
<reference key="2">
    <citation type="journal article" date="2006" name="Biochem. J.">
        <title>Identification and characterization of Thermoplasma acidophilum glyceraldehyde dehydrogenase: a new class of NADP+-specific aldehyde dehydrogenase.</title>
        <authorList>
            <person name="Jung J.H."/>
            <person name="Lee S.B."/>
        </authorList>
    </citation>
    <scope>FUNCTION</scope>
    <scope>CATALYTIC ACTIVITY</scope>
    <scope>SUBUNIT</scope>
    <scope>PATHWAY</scope>
    <scope>BIOPHYSICOCHEMICAL PROPERTIES</scope>
    <scope>ACTIVITY REGULATION</scope>
    <scope>IDENTIFICATION BY MASS SPECTROMETRY</scope>
    <source>
        <strain>ATCC 25905 / DSM 1728 / JCM 9062 / NBRC 15155 / AMRC-C165</strain>
    </source>
</reference>
<reference key="3">
    <citation type="journal article" date="2006" name="FEBS Lett.">
        <title>Glyceraldehyde dehydrogenases from the thermoacidophilic euryarchaeota Picrophilus torridus and Thermoplasma acidophilum, key enzymes of the non-phosphorylative Entner-Doudoroff pathway, constitute a novel enzyme family within the aldehyde dehydrogenase superfamily.</title>
        <authorList>
            <person name="Reher M."/>
            <person name="Schoenheit P."/>
        </authorList>
    </citation>
    <scope>FUNCTION</scope>
    <scope>CATALYTIC ACTIVITY</scope>
    <scope>SUBUNIT</scope>
    <scope>BIOPHYSICOCHEMICAL PROPERTIES</scope>
</reference>
<name>GADH_THEAC</name>